<proteinExistence type="inferred from homology"/>
<accession>Q9Y1U3</accession>
<comment type="function">
    <text evidence="1">Depressant insect beta-toxins cause a transient contraction paralysis followed by a slow flaccid paralysis. They bind voltage-independently at site-4 of sodium channels (Nav) and shift the voltage of activation toward more negative potentials thereby affecting sodium channel activation and promoting spontaneous and repetitive firing (By similarity).</text>
</comment>
<comment type="subcellular location">
    <subcellularLocation>
        <location evidence="1">Secreted</location>
    </subcellularLocation>
</comment>
<comment type="tissue specificity">
    <text>Expressed by the venom gland.</text>
</comment>
<comment type="domain">
    <text evidence="3">Has the structural arrangement of an alpha-helix connected to antiparallel beta-sheets by disulfide bonds (CS-alpha/beta).</text>
</comment>
<comment type="similarity">
    <text evidence="3">Belongs to the long (4 C-C) scorpion toxin superfamily. Sodium channel inhibitor family. Beta subfamily.</text>
</comment>
<keyword id="KW-1015">Disulfide bond</keyword>
<keyword id="KW-0872">Ion channel impairing toxin</keyword>
<keyword id="KW-0528">Neurotoxin</keyword>
<keyword id="KW-0964">Secreted</keyword>
<keyword id="KW-0732">Signal</keyword>
<keyword id="KW-0800">Toxin</keyword>
<keyword id="KW-0738">Voltage-gated sodium channel impairing toxin</keyword>
<reference key="1">
    <citation type="submission" date="2000-06" db="EMBL/GenBank/DDBJ databases">
        <authorList>
            <person name="Ling M.-H."/>
            <person name="Wang C."/>
            <person name="Wang D.-C."/>
            <person name="Chi C.-W."/>
        </authorList>
    </citation>
    <scope>NUCLEOTIDE SEQUENCE [GENOMIC DNA]</scope>
</reference>
<name>SIXC_OLIMR</name>
<protein>
    <recommendedName>
        <fullName>Toxin BmKITc</fullName>
        <shortName>BmK ITc</shortName>
    </recommendedName>
</protein>
<organism>
    <name type="scientific">Olivierus martensii</name>
    <name type="common">Manchurian scorpion</name>
    <name type="synonym">Mesobuthus martensii</name>
    <dbReference type="NCBI Taxonomy" id="34649"/>
    <lineage>
        <taxon>Eukaryota</taxon>
        <taxon>Metazoa</taxon>
        <taxon>Ecdysozoa</taxon>
        <taxon>Arthropoda</taxon>
        <taxon>Chelicerata</taxon>
        <taxon>Arachnida</taxon>
        <taxon>Scorpiones</taxon>
        <taxon>Buthida</taxon>
        <taxon>Buthoidea</taxon>
        <taxon>Buthidae</taxon>
        <taxon>Olivierus</taxon>
    </lineage>
</organism>
<evidence type="ECO:0000250" key="1"/>
<evidence type="ECO:0000255" key="2">
    <source>
        <dbReference type="PROSITE-ProRule" id="PRU01210"/>
    </source>
</evidence>
<evidence type="ECO:0000305" key="3"/>
<feature type="signal peptide" evidence="1">
    <location>
        <begin position="1"/>
        <end position="21"/>
    </location>
</feature>
<feature type="chain" id="PRO_0000035207" description="Toxin BmKITc">
    <location>
        <begin position="22"/>
        <end position="83"/>
    </location>
</feature>
<feature type="domain" description="LCN-type CS-alpha/beta" evidence="2">
    <location>
        <begin position="22"/>
        <end position="82"/>
    </location>
</feature>
<feature type="disulfide bond" evidence="2">
    <location>
        <begin position="31"/>
        <end position="81"/>
    </location>
</feature>
<feature type="disulfide bond" evidence="2">
    <location>
        <begin position="35"/>
        <end position="56"/>
    </location>
</feature>
<feature type="disulfide bond" evidence="2">
    <location>
        <begin position="42"/>
        <end position="63"/>
    </location>
</feature>
<feature type="disulfide bond" evidence="2">
    <location>
        <begin position="46"/>
        <end position="65"/>
    </location>
</feature>
<dbReference type="EMBL" id="AF073899">
    <property type="protein sequence ID" value="AAD41648.2"/>
    <property type="molecule type" value="Genomic_DNA"/>
</dbReference>
<dbReference type="SMR" id="Q9Y1U3"/>
<dbReference type="GO" id="GO:0005576">
    <property type="term" value="C:extracellular region"/>
    <property type="evidence" value="ECO:0007669"/>
    <property type="project" value="UniProtKB-SubCell"/>
</dbReference>
<dbReference type="GO" id="GO:0019871">
    <property type="term" value="F:sodium channel inhibitor activity"/>
    <property type="evidence" value="ECO:0007669"/>
    <property type="project" value="InterPro"/>
</dbReference>
<dbReference type="GO" id="GO:0090729">
    <property type="term" value="F:toxin activity"/>
    <property type="evidence" value="ECO:0007669"/>
    <property type="project" value="UniProtKB-KW"/>
</dbReference>
<dbReference type="GO" id="GO:0006952">
    <property type="term" value="P:defense response"/>
    <property type="evidence" value="ECO:0007669"/>
    <property type="project" value="InterPro"/>
</dbReference>
<dbReference type="CDD" id="cd23106">
    <property type="entry name" value="neurotoxins_LC_scorpion"/>
    <property type="match status" value="1"/>
</dbReference>
<dbReference type="FunFam" id="3.30.30.10:FF:000002">
    <property type="entry name" value="Alpha-like toxin BmK-M1"/>
    <property type="match status" value="1"/>
</dbReference>
<dbReference type="Gene3D" id="3.30.30.10">
    <property type="entry name" value="Knottin, scorpion toxin-like"/>
    <property type="match status" value="1"/>
</dbReference>
<dbReference type="InterPro" id="IPR044062">
    <property type="entry name" value="LCN-type_CS_alpha_beta_dom"/>
</dbReference>
<dbReference type="InterPro" id="IPR003614">
    <property type="entry name" value="Scorpion_toxin-like"/>
</dbReference>
<dbReference type="InterPro" id="IPR036574">
    <property type="entry name" value="Scorpion_toxin-like_sf"/>
</dbReference>
<dbReference type="InterPro" id="IPR018218">
    <property type="entry name" value="Scorpion_toxinL"/>
</dbReference>
<dbReference type="InterPro" id="IPR002061">
    <property type="entry name" value="Scorpion_toxinL/defensin"/>
</dbReference>
<dbReference type="Pfam" id="PF00537">
    <property type="entry name" value="Toxin_3"/>
    <property type="match status" value="1"/>
</dbReference>
<dbReference type="PRINTS" id="PR00285">
    <property type="entry name" value="SCORPNTOXIN"/>
</dbReference>
<dbReference type="SMART" id="SM00505">
    <property type="entry name" value="Knot1"/>
    <property type="match status" value="1"/>
</dbReference>
<dbReference type="SUPFAM" id="SSF57095">
    <property type="entry name" value="Scorpion toxin-like"/>
    <property type="match status" value="1"/>
</dbReference>
<dbReference type="PROSITE" id="PS51863">
    <property type="entry name" value="LCN_CSAB"/>
    <property type="match status" value="1"/>
</dbReference>
<sequence length="85" mass="9480">MKLFLLLVIFASMLNDGLVNADGYIRGSDGCKVSCLWGNDFCDKVCKKSGGSYGYCWTWGLACWCEGLPDNEKWKYESNTCGSKK</sequence>